<dbReference type="EMBL" id="AM292541">
    <property type="protein sequence ID" value="CAL23474.1"/>
    <property type="molecule type" value="mRNA"/>
</dbReference>
<dbReference type="GO" id="GO:0005576">
    <property type="term" value="C:extracellular region"/>
    <property type="evidence" value="ECO:0007669"/>
    <property type="project" value="UniProtKB-SubCell"/>
</dbReference>
<dbReference type="GO" id="GO:0042742">
    <property type="term" value="P:defense response to bacterium"/>
    <property type="evidence" value="ECO:0007669"/>
    <property type="project" value="UniProtKB-KW"/>
</dbReference>
<dbReference type="InterPro" id="IPR004275">
    <property type="entry name" value="Frog_antimicrobial_propeptide"/>
</dbReference>
<dbReference type="Pfam" id="PF03032">
    <property type="entry name" value="FSAP_sig_propep"/>
    <property type="match status" value="1"/>
</dbReference>
<sequence>LKKSLFLVLFLGLVSLSICEEEKRETEEKENEQEDDKSEEKRLLSLVPHAINAVSAIAKHFG</sequence>
<reference evidence="6 7" key="1">
    <citation type="journal article" date="2007" name="Peptides">
        <title>A combined mass spectrometric and cDNA sequencing approach to the isolation and characterization of novel antimicrobial peptides from the skin secretions of Phyllomedusa hypochondrialis azurea.</title>
        <authorList>
            <person name="Thompson A.H."/>
            <person name="Bjourson A.J."/>
            <person name="Orr D.F."/>
            <person name="Shaw C."/>
            <person name="McClean S."/>
        </authorList>
    </citation>
    <scope>NUCLEOTIDE SEQUENCE [MRNA]</scope>
    <scope>SUBCELLULAR LOCATION</scope>
    <scope>TISSUE SPECIFICITY</scope>
    <source>
        <tissue evidence="4">Skin secretion</tissue>
    </source>
</reference>
<gene>
    <name type="primary">psn15</name>
    <name type="synonym">ppp-15</name>
    <name type="synonym">psn-15</name>
</gene>
<name>PLS7_PITAZ</name>
<feature type="signal peptide" evidence="3">
    <location>
        <begin position="1" status="less than"/>
        <end position="19"/>
    </location>
</feature>
<feature type="propeptide" id="PRO_0000250598" evidence="2">
    <location>
        <begin position="20"/>
        <end position="40"/>
    </location>
</feature>
<feature type="peptide" id="PRO_0000250599" description="Phylloseptin-Az7" evidence="1">
    <location>
        <begin position="43"/>
        <end position="61"/>
    </location>
</feature>
<feature type="modified residue" description="Phenylalanine amide" evidence="2">
    <location>
        <position position="61"/>
    </location>
</feature>
<feature type="non-terminal residue" evidence="7">
    <location>
        <position position="1"/>
    </location>
</feature>
<evidence type="ECO:0000250" key="1"/>
<evidence type="ECO:0000250" key="2">
    <source>
        <dbReference type="UniProtKB" id="P84572"/>
    </source>
</evidence>
<evidence type="ECO:0000255" key="3"/>
<evidence type="ECO:0000269" key="4">
    <source>
    </source>
</evidence>
<evidence type="ECO:0000303" key="5">
    <source>
    </source>
</evidence>
<evidence type="ECO:0000305" key="6"/>
<evidence type="ECO:0000312" key="7">
    <source>
        <dbReference type="EMBL" id="CAL23474.1"/>
    </source>
</evidence>
<comment type="function">
    <text evidence="2">Has antimicrobial activity.</text>
</comment>
<comment type="subcellular location">
    <subcellularLocation>
        <location evidence="4">Secreted</location>
    </subcellularLocation>
</comment>
<comment type="tissue specificity">
    <text evidence="4">Expressed by the skin glands.</text>
</comment>
<comment type="similarity">
    <text evidence="3">Belongs to the frog skin active peptide (FSAP) family. Phylloseptin subfamily.</text>
</comment>
<organism>
    <name type="scientific">Pithecopus azureus</name>
    <name type="common">Orange-legged monkey tree frog</name>
    <name type="synonym">Phyllomedusa azurea</name>
    <dbReference type="NCBI Taxonomy" id="2034991"/>
    <lineage>
        <taxon>Eukaryota</taxon>
        <taxon>Metazoa</taxon>
        <taxon>Chordata</taxon>
        <taxon>Craniata</taxon>
        <taxon>Vertebrata</taxon>
        <taxon>Euteleostomi</taxon>
        <taxon>Amphibia</taxon>
        <taxon>Batrachia</taxon>
        <taxon>Anura</taxon>
        <taxon>Neobatrachia</taxon>
        <taxon>Hyloidea</taxon>
        <taxon>Hylidae</taxon>
        <taxon>Phyllomedusinae</taxon>
        <taxon>Pithecopus</taxon>
    </lineage>
</organism>
<accession>Q0VKG9</accession>
<accession>P84940</accession>
<protein>
    <recommendedName>
        <fullName evidence="6">Phylloseptin-Az7</fullName>
        <shortName evidence="6">PLS-Az7</shortName>
    </recommendedName>
    <alternativeName>
        <fullName evidence="5">Phylloseptin-15</fullName>
        <shortName evidence="5">PS-15</shortName>
    </alternativeName>
</protein>
<keyword id="KW-0027">Amidation</keyword>
<keyword id="KW-0878">Amphibian defense peptide</keyword>
<keyword id="KW-0044">Antibiotic</keyword>
<keyword id="KW-0929">Antimicrobial</keyword>
<keyword id="KW-0165">Cleavage on pair of basic residues</keyword>
<keyword id="KW-0964">Secreted</keyword>
<keyword id="KW-0732">Signal</keyword>
<proteinExistence type="evidence at transcript level"/>